<name>SECA_LEPBL</name>
<dbReference type="EC" id="7.4.2.8" evidence="1"/>
<dbReference type="EMBL" id="CP000348">
    <property type="protein sequence ID" value="ABJ79221.1"/>
    <property type="molecule type" value="Genomic_DNA"/>
</dbReference>
<dbReference type="SMR" id="Q050M4"/>
<dbReference type="KEGG" id="lbl:LBL_1776"/>
<dbReference type="HOGENOM" id="CLU_005314_3_0_12"/>
<dbReference type="GO" id="GO:0031522">
    <property type="term" value="C:cell envelope Sec protein transport complex"/>
    <property type="evidence" value="ECO:0007669"/>
    <property type="project" value="TreeGrafter"/>
</dbReference>
<dbReference type="GO" id="GO:0005829">
    <property type="term" value="C:cytosol"/>
    <property type="evidence" value="ECO:0007669"/>
    <property type="project" value="TreeGrafter"/>
</dbReference>
<dbReference type="GO" id="GO:0005886">
    <property type="term" value="C:plasma membrane"/>
    <property type="evidence" value="ECO:0007669"/>
    <property type="project" value="UniProtKB-SubCell"/>
</dbReference>
<dbReference type="GO" id="GO:0005524">
    <property type="term" value="F:ATP binding"/>
    <property type="evidence" value="ECO:0007669"/>
    <property type="project" value="UniProtKB-UniRule"/>
</dbReference>
<dbReference type="GO" id="GO:0008564">
    <property type="term" value="F:protein-exporting ATPase activity"/>
    <property type="evidence" value="ECO:0007669"/>
    <property type="project" value="UniProtKB-EC"/>
</dbReference>
<dbReference type="GO" id="GO:0065002">
    <property type="term" value="P:intracellular protein transmembrane transport"/>
    <property type="evidence" value="ECO:0007669"/>
    <property type="project" value="UniProtKB-UniRule"/>
</dbReference>
<dbReference type="GO" id="GO:0017038">
    <property type="term" value="P:protein import"/>
    <property type="evidence" value="ECO:0007669"/>
    <property type="project" value="InterPro"/>
</dbReference>
<dbReference type="GO" id="GO:0006605">
    <property type="term" value="P:protein targeting"/>
    <property type="evidence" value="ECO:0007669"/>
    <property type="project" value="UniProtKB-UniRule"/>
</dbReference>
<dbReference type="GO" id="GO:0043952">
    <property type="term" value="P:protein transport by the Sec complex"/>
    <property type="evidence" value="ECO:0007669"/>
    <property type="project" value="TreeGrafter"/>
</dbReference>
<dbReference type="CDD" id="cd17928">
    <property type="entry name" value="DEXDc_SecA"/>
    <property type="match status" value="1"/>
</dbReference>
<dbReference type="CDD" id="cd18803">
    <property type="entry name" value="SF2_C_secA"/>
    <property type="match status" value="1"/>
</dbReference>
<dbReference type="FunFam" id="1.10.3060.10:FF:000003">
    <property type="entry name" value="Protein translocase subunit SecA"/>
    <property type="match status" value="1"/>
</dbReference>
<dbReference type="FunFam" id="3.40.50.300:FF:000334">
    <property type="entry name" value="Protein translocase subunit SecA"/>
    <property type="match status" value="1"/>
</dbReference>
<dbReference type="FunFam" id="3.90.1440.10:FF:000002">
    <property type="entry name" value="Protein translocase subunit SecA"/>
    <property type="match status" value="1"/>
</dbReference>
<dbReference type="Gene3D" id="1.10.3060.10">
    <property type="entry name" value="Helical scaffold and wing domains of SecA"/>
    <property type="match status" value="1"/>
</dbReference>
<dbReference type="Gene3D" id="3.40.50.300">
    <property type="entry name" value="P-loop containing nucleotide triphosphate hydrolases"/>
    <property type="match status" value="2"/>
</dbReference>
<dbReference type="Gene3D" id="3.90.1440.10">
    <property type="entry name" value="SecA, preprotein cross-linking domain"/>
    <property type="match status" value="1"/>
</dbReference>
<dbReference type="HAMAP" id="MF_01382">
    <property type="entry name" value="SecA"/>
    <property type="match status" value="1"/>
</dbReference>
<dbReference type="InterPro" id="IPR014001">
    <property type="entry name" value="Helicase_ATP-bd"/>
</dbReference>
<dbReference type="InterPro" id="IPR027417">
    <property type="entry name" value="P-loop_NTPase"/>
</dbReference>
<dbReference type="InterPro" id="IPR000185">
    <property type="entry name" value="SecA"/>
</dbReference>
<dbReference type="InterPro" id="IPR020937">
    <property type="entry name" value="SecA_CS"/>
</dbReference>
<dbReference type="InterPro" id="IPR011115">
    <property type="entry name" value="SecA_DEAD"/>
</dbReference>
<dbReference type="InterPro" id="IPR014018">
    <property type="entry name" value="SecA_motor_DEAD"/>
</dbReference>
<dbReference type="InterPro" id="IPR011130">
    <property type="entry name" value="SecA_preprotein_X-link_dom"/>
</dbReference>
<dbReference type="InterPro" id="IPR044722">
    <property type="entry name" value="SecA_SF2_C"/>
</dbReference>
<dbReference type="InterPro" id="IPR011116">
    <property type="entry name" value="SecA_Wing/Scaffold"/>
</dbReference>
<dbReference type="InterPro" id="IPR036266">
    <property type="entry name" value="SecA_Wing/Scaffold_sf"/>
</dbReference>
<dbReference type="InterPro" id="IPR036670">
    <property type="entry name" value="SecA_X-link_sf"/>
</dbReference>
<dbReference type="NCBIfam" id="NF009538">
    <property type="entry name" value="PRK12904.1"/>
    <property type="match status" value="1"/>
</dbReference>
<dbReference type="NCBIfam" id="TIGR00963">
    <property type="entry name" value="secA"/>
    <property type="match status" value="1"/>
</dbReference>
<dbReference type="PANTHER" id="PTHR30612:SF0">
    <property type="entry name" value="CHLOROPLAST PROTEIN-TRANSPORTING ATPASE"/>
    <property type="match status" value="1"/>
</dbReference>
<dbReference type="PANTHER" id="PTHR30612">
    <property type="entry name" value="SECA INNER MEMBRANE COMPONENT OF SEC PROTEIN SECRETION SYSTEM"/>
    <property type="match status" value="1"/>
</dbReference>
<dbReference type="Pfam" id="PF21090">
    <property type="entry name" value="P-loop_SecA"/>
    <property type="match status" value="1"/>
</dbReference>
<dbReference type="Pfam" id="PF07517">
    <property type="entry name" value="SecA_DEAD"/>
    <property type="match status" value="1"/>
</dbReference>
<dbReference type="Pfam" id="PF01043">
    <property type="entry name" value="SecA_PP_bind"/>
    <property type="match status" value="1"/>
</dbReference>
<dbReference type="Pfam" id="PF07516">
    <property type="entry name" value="SecA_SW"/>
    <property type="match status" value="1"/>
</dbReference>
<dbReference type="PRINTS" id="PR00906">
    <property type="entry name" value="SECA"/>
</dbReference>
<dbReference type="SMART" id="SM00957">
    <property type="entry name" value="SecA_DEAD"/>
    <property type="match status" value="1"/>
</dbReference>
<dbReference type="SMART" id="SM00958">
    <property type="entry name" value="SecA_PP_bind"/>
    <property type="match status" value="1"/>
</dbReference>
<dbReference type="SUPFAM" id="SSF81886">
    <property type="entry name" value="Helical scaffold and wing domains of SecA"/>
    <property type="match status" value="1"/>
</dbReference>
<dbReference type="SUPFAM" id="SSF52540">
    <property type="entry name" value="P-loop containing nucleoside triphosphate hydrolases"/>
    <property type="match status" value="2"/>
</dbReference>
<dbReference type="SUPFAM" id="SSF81767">
    <property type="entry name" value="Pre-protein crosslinking domain of SecA"/>
    <property type="match status" value="1"/>
</dbReference>
<dbReference type="PROSITE" id="PS01312">
    <property type="entry name" value="SECA"/>
    <property type="match status" value="1"/>
</dbReference>
<dbReference type="PROSITE" id="PS51196">
    <property type="entry name" value="SECA_MOTOR_DEAD"/>
    <property type="match status" value="1"/>
</dbReference>
<accession>Q050M4</accession>
<comment type="function">
    <text evidence="1">Part of the Sec protein translocase complex. Interacts with the SecYEG preprotein conducting channel. Has a central role in coupling the hydrolysis of ATP to the transfer of proteins into and across the cell membrane, serving as an ATP-driven molecular motor driving the stepwise translocation of polypeptide chains across the membrane.</text>
</comment>
<comment type="catalytic activity">
    <reaction evidence="1">
        <text>ATP + H2O + cellular proteinSide 1 = ADP + phosphate + cellular proteinSide 2.</text>
        <dbReference type="EC" id="7.4.2.8"/>
    </reaction>
</comment>
<comment type="subunit">
    <text evidence="1">Monomer and homodimer. Part of the essential Sec protein translocation apparatus which comprises SecA, SecYEG and auxiliary proteins SecDF. Other proteins may also be involved.</text>
</comment>
<comment type="subcellular location">
    <subcellularLocation>
        <location evidence="1">Cell inner membrane</location>
        <topology evidence="1">Peripheral membrane protein</topology>
        <orientation evidence="1">Cytoplasmic side</orientation>
    </subcellularLocation>
    <subcellularLocation>
        <location evidence="1">Cytoplasm</location>
    </subcellularLocation>
    <text evidence="1">Distribution is 50-50.</text>
</comment>
<comment type="similarity">
    <text evidence="1">Belongs to the SecA family.</text>
</comment>
<protein>
    <recommendedName>
        <fullName evidence="1">Protein translocase subunit SecA</fullName>
        <ecNumber evidence="1">7.4.2.8</ecNumber>
    </recommendedName>
</protein>
<proteinExistence type="inferred from homology"/>
<organism>
    <name type="scientific">Leptospira borgpetersenii serovar Hardjo-bovis (strain L550)</name>
    <dbReference type="NCBI Taxonomy" id="355276"/>
    <lineage>
        <taxon>Bacteria</taxon>
        <taxon>Pseudomonadati</taxon>
        <taxon>Spirochaetota</taxon>
        <taxon>Spirochaetia</taxon>
        <taxon>Leptospirales</taxon>
        <taxon>Leptospiraceae</taxon>
        <taxon>Leptospira</taxon>
    </lineage>
</organism>
<keyword id="KW-0067">ATP-binding</keyword>
<keyword id="KW-0997">Cell inner membrane</keyword>
<keyword id="KW-1003">Cell membrane</keyword>
<keyword id="KW-0963">Cytoplasm</keyword>
<keyword id="KW-0472">Membrane</keyword>
<keyword id="KW-0547">Nucleotide-binding</keyword>
<keyword id="KW-0653">Protein transport</keyword>
<keyword id="KW-1278">Translocase</keyword>
<keyword id="KW-0811">Translocation</keyword>
<keyword id="KW-0813">Transport</keyword>
<reference key="1">
    <citation type="journal article" date="2006" name="Proc. Natl. Acad. Sci. U.S.A.">
        <title>Genome reduction in Leptospira borgpetersenii reflects limited transmission potential.</title>
        <authorList>
            <person name="Bulach D.M."/>
            <person name="Zuerner R.L."/>
            <person name="Wilson P."/>
            <person name="Seemann T."/>
            <person name="McGrath A."/>
            <person name="Cullen P.A."/>
            <person name="Davis J."/>
            <person name="Johnson M."/>
            <person name="Kuczek E."/>
            <person name="Alt D.P."/>
            <person name="Peterson-Burch B."/>
            <person name="Coppel R.L."/>
            <person name="Rood J.I."/>
            <person name="Davies J.K."/>
            <person name="Adler B."/>
        </authorList>
    </citation>
    <scope>NUCLEOTIDE SEQUENCE [LARGE SCALE GENOMIC DNA]</scope>
    <source>
        <strain>L550</strain>
    </source>
</reference>
<evidence type="ECO:0000255" key="1">
    <source>
        <dbReference type="HAMAP-Rule" id="MF_01382"/>
    </source>
</evidence>
<evidence type="ECO:0000256" key="2">
    <source>
        <dbReference type="SAM" id="MobiDB-lite"/>
    </source>
</evidence>
<gene>
    <name evidence="1" type="primary">secA</name>
    <name type="ordered locus">LBL_1776</name>
</gene>
<feature type="chain" id="PRO_1000073488" description="Protein translocase subunit SecA">
    <location>
        <begin position="1"/>
        <end position="904"/>
    </location>
</feature>
<feature type="region of interest" description="Disordered" evidence="2">
    <location>
        <begin position="870"/>
        <end position="904"/>
    </location>
</feature>
<feature type="compositionally biased region" description="Low complexity" evidence="2">
    <location>
        <begin position="876"/>
        <end position="889"/>
    </location>
</feature>
<feature type="binding site" evidence="1">
    <location>
        <position position="89"/>
    </location>
    <ligand>
        <name>ATP</name>
        <dbReference type="ChEBI" id="CHEBI:30616"/>
    </ligand>
</feature>
<feature type="binding site" evidence="1">
    <location>
        <begin position="107"/>
        <end position="111"/>
    </location>
    <ligand>
        <name>ATP</name>
        <dbReference type="ChEBI" id="CHEBI:30616"/>
    </ligand>
</feature>
<feature type="binding site" evidence="1">
    <location>
        <position position="496"/>
    </location>
    <ligand>
        <name>ATP</name>
        <dbReference type="ChEBI" id="CHEBI:30616"/>
    </ligand>
</feature>
<sequence>MNMIQNILRVILGSKFERDLKKLIPIVGQINSLEKEMKETSDSLLSSQTQKFRERIARGESLDSILPEAFATVREVSLRTMGMRHFDVQMMGGIALHRGNIAEMKTGEGKTLTSTLAVYLNSLAGKGVHVVTVNDYLAKRDANWMKPIYDFLGISVGVIQHDMDHEQRKIAYSADITYGTNNEFGFDYLRDNMVSHKDHKVQRSHFFAIVDEVDSILIDEARTPLIISGSSDETTDKYVRINKIIPKLVAIEDFEVDEKARNVLLSEKGVSHVEEILGIENLYAPENVDLVHHVHQALKAHKIFQKDVDYVVQNGEVIIVDEFTGRLMAGRRYSDGLHQALEAKESVTIAKESQTLASITFQNYFRMYDKLAGMTGTADTEAEEFRKIYDLDVIVIPPNVSVRRKDSPDRVYRTEKEKFDAILAEIRELQSKKQPVLVGTISIEKSEILSKMLSSAGIQHNVLNAKFHEREAEIVANAGKPGAVTIATNMAGRGTDIVLGGAQLYKENLETWKDDDDLVRRFKESILKQELDNAELLIREMDSSVKQKRASEILESVKIWKKNHEDVLVAGGLHILGTERHEARRIDNQLRGRSGRQGDPGSSRFYLSLQDDLMRIFGSDRISGLMKWANMPEGQEIESKMVSNAIARAQKRVEGHNFDIRKHLLEYDDVMNRQRIVIYKMRNEVLENEDISSLILSFIEEAVENQIVAHCEGNNPSSWNLDSLKEWLEGLELNLEINEEDFKKTKNPQLALFEKVNAAAKQKYEDRAESIGKDIWKLLERNIFLDILDHRWKEHLYSMDHLREGIWTVGYSERNPLVEYKLQGFRMFDVAIENLKNEVVNFLFRVEVSENSKLPEERREYKKVGQEVTGGFQELSSGTPSPTVTVTTSSGGGTERKTSRRRKR</sequence>